<feature type="chain" id="PRO_0000060308" description="Molybdate/tungstate transport system permease protein WtpB">
    <location>
        <begin position="1"/>
        <end position="249"/>
    </location>
</feature>
<feature type="topological domain" description="Cytoplasmic" evidence="2">
    <location>
        <begin position="1"/>
        <end position="5"/>
    </location>
</feature>
<feature type="transmembrane region" description="Helical" evidence="3">
    <location>
        <begin position="6"/>
        <end position="26"/>
    </location>
</feature>
<feature type="topological domain" description="Extracellular" evidence="2">
    <location>
        <begin position="27"/>
        <end position="48"/>
    </location>
</feature>
<feature type="transmembrane region" description="Helical" evidence="3">
    <location>
        <begin position="49"/>
        <end position="69"/>
    </location>
</feature>
<feature type="topological domain" description="Cytoplasmic" evidence="2">
    <location>
        <begin position="70"/>
        <end position="93"/>
    </location>
</feature>
<feature type="transmembrane region" description="Helical" evidence="3">
    <location>
        <begin position="94"/>
        <end position="114"/>
    </location>
</feature>
<feature type="topological domain" description="Extracellular" evidence="2">
    <location>
        <begin position="115"/>
        <end position="116"/>
    </location>
</feature>
<feature type="transmembrane region" description="Helical" evidence="3">
    <location>
        <begin position="117"/>
        <end position="137"/>
    </location>
</feature>
<feature type="topological domain" description="Cytoplasmic" evidence="2">
    <location>
        <begin position="138"/>
        <end position="177"/>
    </location>
</feature>
<feature type="transmembrane region" description="Helical" evidence="3">
    <location>
        <begin position="178"/>
        <end position="198"/>
    </location>
</feature>
<feature type="topological domain" description="Extracellular" evidence="2">
    <location>
        <begin position="199"/>
        <end position="223"/>
    </location>
</feature>
<feature type="transmembrane region" description="Helical" evidence="3">
    <location>
        <begin position="224"/>
        <end position="244"/>
    </location>
</feature>
<feature type="topological domain" description="Cytoplasmic" evidence="2">
    <location>
        <begin position="245"/>
        <end position="249"/>
    </location>
</feature>
<feature type="domain" description="ABC transmembrane type-1" evidence="3">
    <location>
        <begin position="45"/>
        <end position="240"/>
    </location>
</feature>
<comment type="function">
    <text evidence="1">Part of the ABC transporter complex WtpABC involved in molybdate/tungstate import. Probably responsible for the translocation of the substrate across the membrane (By similarity).</text>
</comment>
<comment type="subunit">
    <text evidence="1">The complex is composed of two ATP-binding proteins (WtpC), two transmembrane proteins (WtpB) and a solute-binding protein (WtpA).</text>
</comment>
<comment type="subcellular location">
    <subcellularLocation>
        <location evidence="1">Cell membrane</location>
        <topology evidence="3">Multi-pass membrane protein</topology>
    </subcellularLocation>
</comment>
<comment type="similarity">
    <text evidence="4">Belongs to the binding-protein-dependent transport system permease family.</text>
</comment>
<dbReference type="EMBL" id="L77117">
    <property type="protein sequence ID" value="AAB99376.1"/>
    <property type="molecule type" value="Genomic_DNA"/>
</dbReference>
<dbReference type="PIR" id="G64470">
    <property type="entry name" value="G64470"/>
</dbReference>
<dbReference type="RefSeq" id="WP_010870885.1">
    <property type="nucleotide sequence ID" value="NC_000909.1"/>
</dbReference>
<dbReference type="SMR" id="Q58763"/>
<dbReference type="FunCoup" id="Q58763">
    <property type="interactions" value="10"/>
</dbReference>
<dbReference type="STRING" id="243232.MJ_1368"/>
<dbReference type="TCDB" id="3.A.1.6.9">
    <property type="family name" value="the atp-binding cassette (abc) superfamily"/>
</dbReference>
<dbReference type="PaxDb" id="243232-MJ_1368"/>
<dbReference type="EnsemblBacteria" id="AAB99376">
    <property type="protein sequence ID" value="AAB99376"/>
    <property type="gene ID" value="MJ_1368"/>
</dbReference>
<dbReference type="GeneID" id="1452271"/>
<dbReference type="KEGG" id="mja:MJ_1368"/>
<dbReference type="eggNOG" id="arCOG00164">
    <property type="taxonomic scope" value="Archaea"/>
</dbReference>
<dbReference type="HOGENOM" id="CLU_016047_14_1_2"/>
<dbReference type="InParanoid" id="Q58763"/>
<dbReference type="OrthoDB" id="11163at2157"/>
<dbReference type="PhylomeDB" id="Q58763"/>
<dbReference type="Proteomes" id="UP000000805">
    <property type="component" value="Chromosome"/>
</dbReference>
<dbReference type="GO" id="GO:0005886">
    <property type="term" value="C:plasma membrane"/>
    <property type="evidence" value="ECO:0007669"/>
    <property type="project" value="UniProtKB-SubCell"/>
</dbReference>
<dbReference type="GO" id="GO:0055085">
    <property type="term" value="P:transmembrane transport"/>
    <property type="evidence" value="ECO:0007669"/>
    <property type="project" value="InterPro"/>
</dbReference>
<dbReference type="CDD" id="cd06261">
    <property type="entry name" value="TM_PBP2"/>
    <property type="match status" value="1"/>
</dbReference>
<dbReference type="Gene3D" id="1.10.3720.10">
    <property type="entry name" value="MetI-like"/>
    <property type="match status" value="1"/>
</dbReference>
<dbReference type="InterPro" id="IPR000515">
    <property type="entry name" value="MetI-like"/>
</dbReference>
<dbReference type="InterPro" id="IPR035906">
    <property type="entry name" value="MetI-like_sf"/>
</dbReference>
<dbReference type="InterPro" id="IPR053405">
    <property type="entry name" value="Mo/W_ABC_Transporter_Permease"/>
</dbReference>
<dbReference type="NCBIfam" id="NF040839">
    <property type="entry name" value="tungstate_WtpB"/>
    <property type="match status" value="1"/>
</dbReference>
<dbReference type="PANTHER" id="PTHR30183">
    <property type="entry name" value="MOLYBDENUM TRANSPORT SYSTEM PERMEASE PROTEIN MODB"/>
    <property type="match status" value="1"/>
</dbReference>
<dbReference type="PANTHER" id="PTHR30183:SF3">
    <property type="entry name" value="MOLYBDENUM TRANSPORT SYSTEM PERMEASE PROTEIN MODB"/>
    <property type="match status" value="1"/>
</dbReference>
<dbReference type="Pfam" id="PF00528">
    <property type="entry name" value="BPD_transp_1"/>
    <property type="match status" value="1"/>
</dbReference>
<dbReference type="SUPFAM" id="SSF161098">
    <property type="entry name" value="MetI-like"/>
    <property type="match status" value="1"/>
</dbReference>
<dbReference type="PROSITE" id="PS50928">
    <property type="entry name" value="ABC_TM1"/>
    <property type="match status" value="1"/>
</dbReference>
<proteinExistence type="inferred from homology"/>
<evidence type="ECO:0000250" key="1"/>
<evidence type="ECO:0000255" key="2"/>
<evidence type="ECO:0000255" key="3">
    <source>
        <dbReference type="PROSITE-ProRule" id="PRU00441"/>
    </source>
</evidence>
<evidence type="ECO:0000305" key="4"/>
<name>WTPB_METJA</name>
<gene>
    <name type="primary">wtpB</name>
    <name type="ordered locus">MJ1368</name>
</gene>
<protein>
    <recommendedName>
        <fullName>Molybdate/tungstate transport system permease protein WtpB</fullName>
    </recommendedName>
</protein>
<sequence>MEKFDIAMTVFLVMIFLFIFLPIIYMLSNPGDLNQLLDKEVIEAFKTTLLAGAVATLIALIFGIPTGYILARYDFKFKSFVEAVLDLPMAIPHSVIGIIILSFIYGIDIINFIGRYVVDNFWGIVTVYLFVGIPFMVNSIRDGFLSVDEEIEYVSRTLGASKIRTFFEISLPLIKNNIISGIILSFARGISEVGAILIIAYYPKTVPILIYERFMSFGLDASKPISVGMILISIALFALLRMFGRMRGR</sequence>
<accession>Q58763</accession>
<keyword id="KW-1003">Cell membrane</keyword>
<keyword id="KW-0472">Membrane</keyword>
<keyword id="KW-0500">Molybdenum</keyword>
<keyword id="KW-1185">Reference proteome</keyword>
<keyword id="KW-0812">Transmembrane</keyword>
<keyword id="KW-1133">Transmembrane helix</keyword>
<keyword id="KW-0813">Transport</keyword>
<organism>
    <name type="scientific">Methanocaldococcus jannaschii (strain ATCC 43067 / DSM 2661 / JAL-1 / JCM 10045 / NBRC 100440)</name>
    <name type="common">Methanococcus jannaschii</name>
    <dbReference type="NCBI Taxonomy" id="243232"/>
    <lineage>
        <taxon>Archaea</taxon>
        <taxon>Methanobacteriati</taxon>
        <taxon>Methanobacteriota</taxon>
        <taxon>Methanomada group</taxon>
        <taxon>Methanococci</taxon>
        <taxon>Methanococcales</taxon>
        <taxon>Methanocaldococcaceae</taxon>
        <taxon>Methanocaldococcus</taxon>
    </lineage>
</organism>
<reference key="1">
    <citation type="journal article" date="1996" name="Science">
        <title>Complete genome sequence of the methanogenic archaeon, Methanococcus jannaschii.</title>
        <authorList>
            <person name="Bult C.J."/>
            <person name="White O."/>
            <person name="Olsen G.J."/>
            <person name="Zhou L."/>
            <person name="Fleischmann R.D."/>
            <person name="Sutton G.G."/>
            <person name="Blake J.A."/>
            <person name="FitzGerald L.M."/>
            <person name="Clayton R.A."/>
            <person name="Gocayne J.D."/>
            <person name="Kerlavage A.R."/>
            <person name="Dougherty B.A."/>
            <person name="Tomb J.-F."/>
            <person name="Adams M.D."/>
            <person name="Reich C.I."/>
            <person name="Overbeek R."/>
            <person name="Kirkness E.F."/>
            <person name="Weinstock K.G."/>
            <person name="Merrick J.M."/>
            <person name="Glodek A."/>
            <person name="Scott J.L."/>
            <person name="Geoghagen N.S.M."/>
            <person name="Weidman J.F."/>
            <person name="Fuhrmann J.L."/>
            <person name="Nguyen D."/>
            <person name="Utterback T.R."/>
            <person name="Kelley J.M."/>
            <person name="Peterson J.D."/>
            <person name="Sadow P.W."/>
            <person name="Hanna M.C."/>
            <person name="Cotton M.D."/>
            <person name="Roberts K.M."/>
            <person name="Hurst M.A."/>
            <person name="Kaine B.P."/>
            <person name="Borodovsky M."/>
            <person name="Klenk H.-P."/>
            <person name="Fraser C.M."/>
            <person name="Smith H.O."/>
            <person name="Woese C.R."/>
            <person name="Venter J.C."/>
        </authorList>
    </citation>
    <scope>NUCLEOTIDE SEQUENCE [LARGE SCALE GENOMIC DNA]</scope>
    <source>
        <strain>ATCC 43067 / DSM 2661 / JAL-1 / JCM 10045 / NBRC 100440</strain>
    </source>
</reference>